<proteinExistence type="evidence at transcript level"/>
<protein>
    <recommendedName>
        <fullName>Conotoxin LvVID</fullName>
    </recommendedName>
</protein>
<keyword id="KW-1015">Disulfide bond</keyword>
<keyword id="KW-0960">Knottin</keyword>
<keyword id="KW-0964">Secreted</keyword>
<keyword id="KW-0732">Signal</keyword>
<keyword id="KW-0800">Toxin</keyword>
<evidence type="ECO:0000250" key="1"/>
<evidence type="ECO:0000255" key="2"/>
<evidence type="ECO:0000305" key="3"/>
<name>O16D_CONLI</name>
<sequence length="69" mass="7677">VLIIAVLFLTACQLTTAETYPRGQQRHHALRSTDKNSKLTRGCTPRNGACGYHSHCCSNFCHTWANVCL</sequence>
<organism>
    <name type="scientific">Conus lividus</name>
    <name type="common">Livid cone</name>
    <dbReference type="NCBI Taxonomy" id="89426"/>
    <lineage>
        <taxon>Eukaryota</taxon>
        <taxon>Metazoa</taxon>
        <taxon>Spiralia</taxon>
        <taxon>Lophotrochozoa</taxon>
        <taxon>Mollusca</taxon>
        <taxon>Gastropoda</taxon>
        <taxon>Caenogastropoda</taxon>
        <taxon>Neogastropoda</taxon>
        <taxon>Conoidea</taxon>
        <taxon>Conidae</taxon>
        <taxon>Conus</taxon>
        <taxon>Lividoconus</taxon>
    </lineage>
</organism>
<comment type="subcellular location">
    <subcellularLocation>
        <location evidence="1">Secreted</location>
    </subcellularLocation>
</comment>
<comment type="tissue specificity">
    <text>Expressed by the venom duct.</text>
</comment>
<comment type="domain">
    <text evidence="1">The presence of a 'disulfide through disulfide knot' structurally defines this protein as a knottin.</text>
</comment>
<comment type="domain">
    <text>The cysteine framework is VI/VII (C-C-CC-C-C).</text>
</comment>
<comment type="similarity">
    <text evidence="3">Belongs to the conotoxin O1 superfamily.</text>
</comment>
<accession>Q9TVF6</accession>
<reference key="1">
    <citation type="journal article" date="1999" name="Proc. Natl. Acad. Sci. U.S.A.">
        <title>Molecular genetics of ecological diversification: duplication and rapid evolution of toxin genes of the venomous gastropod Conus.</title>
        <authorList>
            <person name="Duda T.F. Jr."/>
            <person name="Palumbi S.R."/>
        </authorList>
    </citation>
    <scope>NUCLEOTIDE SEQUENCE [MRNA]</scope>
    <source>
        <tissue>Venom duct</tissue>
    </source>
</reference>
<reference key="2">
    <citation type="journal article" date="2004" name="Proc. R. Soc. B">
        <title>Gene expression and feeding ecology: evolution of piscivory in the venomous gastropod genus Conus.</title>
        <authorList>
            <person name="Duda T.F. Jr."/>
            <person name="Palumbi S.R."/>
        </authorList>
    </citation>
    <scope>NUCLEOTIDE SEQUENCE [MRNA]</scope>
    <source>
        <tissue>Venom duct</tissue>
    </source>
</reference>
<feature type="signal peptide" evidence="2">
    <location>
        <begin position="1" status="less than"/>
        <end position="17"/>
    </location>
</feature>
<feature type="propeptide" id="PRO_0000392146" evidence="1">
    <location>
        <begin position="18"/>
        <end position="40"/>
    </location>
</feature>
<feature type="peptide" id="PRO_0000392147" description="Conotoxin LvVID">
    <location>
        <begin position="42"/>
        <end position="69"/>
    </location>
</feature>
<feature type="disulfide bond" evidence="1">
    <location>
        <begin position="43"/>
        <end position="57"/>
    </location>
</feature>
<feature type="disulfide bond" evidence="1">
    <location>
        <begin position="50"/>
        <end position="61"/>
    </location>
</feature>
<feature type="disulfide bond" evidence="1">
    <location>
        <begin position="56"/>
        <end position="68"/>
    </location>
</feature>
<feature type="non-terminal residue">
    <location>
        <position position="1"/>
    </location>
</feature>
<dbReference type="EMBL" id="AF089971">
    <property type="protein sequence ID" value="AAD48226.1"/>
    <property type="molecule type" value="mRNA"/>
</dbReference>
<dbReference type="EMBL" id="AF089972">
    <property type="protein sequence ID" value="AAD48227.1"/>
    <property type="molecule type" value="mRNA"/>
</dbReference>
<dbReference type="EMBL" id="AF089973">
    <property type="protein sequence ID" value="AAD48228.1"/>
    <property type="molecule type" value="mRNA"/>
</dbReference>
<dbReference type="EMBL" id="AF089974">
    <property type="protein sequence ID" value="AAD48229.1"/>
    <property type="molecule type" value="mRNA"/>
</dbReference>
<dbReference type="EMBL" id="AF089975">
    <property type="protein sequence ID" value="AAD48230.1"/>
    <property type="molecule type" value="mRNA"/>
</dbReference>
<dbReference type="ConoServer" id="948">
    <property type="toxin name" value="LvVID precursor"/>
</dbReference>
<dbReference type="GO" id="GO:0005576">
    <property type="term" value="C:extracellular region"/>
    <property type="evidence" value="ECO:0007669"/>
    <property type="project" value="UniProtKB-SubCell"/>
</dbReference>
<dbReference type="GO" id="GO:0008200">
    <property type="term" value="F:ion channel inhibitor activity"/>
    <property type="evidence" value="ECO:0007669"/>
    <property type="project" value="InterPro"/>
</dbReference>
<dbReference type="GO" id="GO:0090729">
    <property type="term" value="F:toxin activity"/>
    <property type="evidence" value="ECO:0007669"/>
    <property type="project" value="UniProtKB-KW"/>
</dbReference>
<dbReference type="InterPro" id="IPR004214">
    <property type="entry name" value="Conotoxin"/>
</dbReference>
<dbReference type="Pfam" id="PF02950">
    <property type="entry name" value="Conotoxin"/>
    <property type="match status" value="1"/>
</dbReference>